<organism>
    <name type="scientific">Solanum tuberosum</name>
    <name type="common">Potato</name>
    <dbReference type="NCBI Taxonomy" id="4113"/>
    <lineage>
        <taxon>Eukaryota</taxon>
        <taxon>Viridiplantae</taxon>
        <taxon>Streptophyta</taxon>
        <taxon>Embryophyta</taxon>
        <taxon>Tracheophyta</taxon>
        <taxon>Spermatophyta</taxon>
        <taxon>Magnoliopsida</taxon>
        <taxon>eudicotyledons</taxon>
        <taxon>Gunneridae</taxon>
        <taxon>Pentapetalae</taxon>
        <taxon>asterids</taxon>
        <taxon>lamiids</taxon>
        <taxon>Solanales</taxon>
        <taxon>Solanaceae</taxon>
        <taxon>Solanoideae</taxon>
        <taxon>Solaneae</taxon>
        <taxon>Solanum</taxon>
    </lineage>
</organism>
<protein>
    <recommendedName>
        <fullName>Cysteine protease inhibitor 3</fullName>
    </recommendedName>
    <alternativeName>
        <fullName>PCPI-3</fullName>
        <shortName>Pcpi3</shortName>
    </alternativeName>
</protein>
<accession>O24388</accession>
<proteinExistence type="evidence at transcript level"/>
<comment type="function">
    <text>Inhibitor of cysteine proteases. May protect the plant by inhibiting proteases of invading organisms.</text>
</comment>
<comment type="subcellular location">
    <subcellularLocation>
        <location evidence="1">Vacuole</location>
    </subcellularLocation>
</comment>
<comment type="similarity">
    <text evidence="2">Belongs to the protease inhibitor I3 (leguminous Kunitz-type inhibitor) family.</text>
</comment>
<sequence length="146" mass="16378">YNIGNLQCPNAVLQHMSIPQFLGEGKPVVFVRKSESDYGDVVRVMTVVYIKFFVKTTKLCVDQTVWKVNDEQLVVTGGKVGNENDIFKIMKTDLVTPGGSKYVYKLLHCPSHLGCKNIGGNFKNGYPRLVTVDDDKDFIPFVFIKA</sequence>
<dbReference type="EMBL" id="U59277">
    <property type="protein sequence ID" value="AAB63103.1"/>
    <property type="molecule type" value="mRNA"/>
</dbReference>
<dbReference type="SMR" id="O24388"/>
<dbReference type="MEROPS" id="I03.017"/>
<dbReference type="InParanoid" id="O24388"/>
<dbReference type="Proteomes" id="UP000011115">
    <property type="component" value="Unassembled WGS sequence"/>
</dbReference>
<dbReference type="ExpressionAtlas" id="O24388">
    <property type="expression patterns" value="differential"/>
</dbReference>
<dbReference type="GO" id="GO:0005773">
    <property type="term" value="C:vacuole"/>
    <property type="evidence" value="ECO:0007669"/>
    <property type="project" value="UniProtKB-SubCell"/>
</dbReference>
<dbReference type="GO" id="GO:0004869">
    <property type="term" value="F:cysteine-type endopeptidase inhibitor activity"/>
    <property type="evidence" value="ECO:0007669"/>
    <property type="project" value="UniProtKB-KW"/>
</dbReference>
<dbReference type="Gene3D" id="2.80.10.50">
    <property type="match status" value="1"/>
</dbReference>
<dbReference type="InterPro" id="IPR011065">
    <property type="entry name" value="Kunitz_inhibitor_STI-like_sf"/>
</dbReference>
<dbReference type="InterPro" id="IPR002160">
    <property type="entry name" value="Prot_inh_Kunz-lg"/>
</dbReference>
<dbReference type="PANTHER" id="PTHR33107:SF44">
    <property type="entry name" value="CYSTEINE PROTEASE INHIBITOR 1"/>
    <property type="match status" value="1"/>
</dbReference>
<dbReference type="PANTHER" id="PTHR33107">
    <property type="entry name" value="KUNITZ TRYPSIN INHIBITOR 2"/>
    <property type="match status" value="1"/>
</dbReference>
<dbReference type="Pfam" id="PF00197">
    <property type="entry name" value="Kunitz_legume"/>
    <property type="match status" value="1"/>
</dbReference>
<dbReference type="SMART" id="SM00452">
    <property type="entry name" value="STI"/>
    <property type="match status" value="1"/>
</dbReference>
<dbReference type="SUPFAM" id="SSF50386">
    <property type="entry name" value="STI-like"/>
    <property type="match status" value="1"/>
</dbReference>
<evidence type="ECO:0000250" key="1"/>
<evidence type="ECO:0000305" key="2"/>
<feature type="chain" id="PRO_0000083315" description="Cysteine protease inhibitor 3">
    <location>
        <begin position="1" status="less than"/>
        <end position="146"/>
    </location>
</feature>
<feature type="disulfide bond" evidence="1">
    <location>
        <begin position="8"/>
        <end position="60"/>
    </location>
</feature>
<feature type="disulfide bond" evidence="1">
    <location>
        <begin position="109"/>
        <end position="115"/>
    </location>
</feature>
<feature type="non-terminal residue">
    <location>
        <position position="1"/>
    </location>
</feature>
<name>CPI3_SOLTU</name>
<keyword id="KW-1015">Disulfide bond</keyword>
<keyword id="KW-0646">Protease inhibitor</keyword>
<keyword id="KW-1185">Reference proteome</keyword>
<keyword id="KW-0789">Thiol protease inhibitor</keyword>
<keyword id="KW-0926">Vacuole</keyword>
<reference key="1">
    <citation type="journal article" date="1997" name="Plant Mol. Biol.">
        <title>Potato cysteine proteinase inhibitor gene family: molecular cloning, characterisation and immunocytochemical localisation studies.</title>
        <authorList>
            <person name="Gruden K."/>
            <person name="Strukelj B."/>
            <person name="Ravnikar M."/>
            <person name="Poljsak-Prijatelj M."/>
            <person name="Mavric I."/>
            <person name="Brzin J."/>
            <person name="Pungercar J."/>
            <person name="Kregar I."/>
        </authorList>
    </citation>
    <scope>NUCLEOTIDE SEQUENCE [MRNA]</scope>
    <source>
        <strain>cv. Ulster Sceptre</strain>
        <tissue>Tuber</tissue>
    </source>
</reference>